<keyword id="KW-0067">ATP-binding</keyword>
<keyword id="KW-0131">Cell cycle</keyword>
<keyword id="KW-0132">Cell division</keyword>
<keyword id="KW-0159">Chromosome partition</keyword>
<keyword id="KW-0175">Coiled coil</keyword>
<keyword id="KW-0963">Cytoplasm</keyword>
<keyword id="KW-0226">DNA condensation</keyword>
<keyword id="KW-0238">DNA-binding</keyword>
<keyword id="KW-0547">Nucleotide-binding</keyword>
<accession>A4W8U3</accession>
<gene>
    <name evidence="1" type="primary">mukB</name>
    <name type="ordered locus">Ent638_1443</name>
</gene>
<proteinExistence type="inferred from homology"/>
<sequence>MIERGKFRSLTLINWNGFFARTFDLDELVTTLSGGNGAGKSTTMAAFVTALIPDLTLLHFRNTTEAGATSGSRDKGLHGKLKAGVCYSVLDVINSRHQRVVVGVRLQQVAGRDRKVDIKPFAIQGLPTSVQPTAMLTETLNDRQARVLSLQELKEKLEEIEGVQFKQFNSITDYHSLMFDLGIVARRLRSASDRSKYYRLIEASLYGGISSAITRSLRDYLLPENSGVRKAFQDMEAALRENRMTLEAIRVTQSDRDLFKHLISEATNYVAADYMRHANERRIHLDKALEYRRELFTSRKQLVAEQYKHVEMARELGEQNGAEGDLEADYQAASDHLNLVQTALRQQEKIERYESDLDELQIRLEEQNEVVAEATEMQEENEARAEAAELEVDELKNQLADYQQALDVQQTRAIQYTQALQALQRAKELCHLPDLTPESADEWLETFQAKQQEATDKLLSLDQKMSVAQTAHSQFEQAYQLVTAINGPLARSDAWEVARELLRDGVNQRHLAEQVQPLRMRLNELEQRLREQQEAERLLAEFCKRYGKRVDIDDLEALHQELEARIASLSDSVSNAGEQRMSLRQELEQLQSRTQKLLQRAPVWLAAQSSLNQLSEQCGEEFESSQDVTEYLQQLLEREREAIVERDEVGARKRAIDEEIERLSQPGGAEDSRLNALAERFGGVLLSEIYDDVSLDDAPYFSALYGPSRNAIVVPDLSLIADQLEGLEDCPEDLYLIEGDPQSFDDSVFSVDELEKAVVVKIADRQWRYSRFPTLPLFGRAARENRIESLHAERETLSERFATLSFDVQKTQRLHQSFSRFIGSHVAVAFEPDPEAEIRKLNTRRGELERAISLHENDNQQSRVQFEQAKEGVAALNRILPRLNLLADETLADRVDEIQERLDEAQEAARFVQQHGNQLAKLEPVLSVLQSDPEQFEQLKEDYAYSQQVQRDARQQAFALAEVVQRRAHFGYSDSAEMLSGNSDLNEKLRHRLEQAETERSRTRDALRSHAAQLSQYGQVLASLKSSFDTKKELLTDLQKELQDIGVRADSGAEERARIRRDELHSQLSNNRSRRNQLEKALTLCEAEMDNLTRRLRKLERDYHEMREQVVTAKAGWCAVMRLVKDSGVERRLHRRELAYLSGDELRSMSDKALGALRPAVADNEHLRDVLRMSEDPKRPERKIQFFVAVYQHLRERIRQDIIRTDDPVEAIEQMEIELGRLTEELTSREQTLAISSRSVANIIRKTIQREQNRIRMLNQGLQSVSFGQVNSVRLNVNVLEAHATLLDVLSEQHEQHQDLFNSNRLTFSEALAKLYQRLNPQIDMGQRTPQTIGEELLDYRNYLEMEVEVNRGSDGWLRAESGALSTGEAIGTGMSILVMVVQSWEDESRRLRGKDISPCRLLFLDEAARLDARSIATLFELCDRLGMQLIIAAPENISPEKGTTYKLVRKVFQNTEHVHVVGLRGFAPQPPESLPEAADAS</sequence>
<name>MUKB_ENT38</name>
<comment type="function">
    <text evidence="1">Plays a central role in chromosome condensation, segregation and cell cycle progression. Functions as a homodimer, which is essential for chromosome partition. Involved in negative DNA supercoiling in vivo, and by this means organize and compact chromosomes. May achieve or facilitate chromosome segregation by condensation DNA from both sides of a centrally located replisome during cell division.</text>
</comment>
<comment type="subunit">
    <text evidence="1">Homodimerization via its hinge domain. Binds to DNA via its C-terminal region. Interacts, and probably forms a ternary complex, with MukE and MukF via its C-terminal region. The complex formation is stimulated by calcium or magnesium. Interacts with tubulin-related protein FtsZ.</text>
</comment>
<comment type="subcellular location">
    <subcellularLocation>
        <location evidence="1">Cytoplasm</location>
        <location evidence="1">Nucleoid</location>
    </subcellularLocation>
    <text evidence="1">Restricted to the nucleoid region.</text>
</comment>
<comment type="domain">
    <text evidence="1">The hinge domain, which separates the large intramolecular coiled coil regions, allows the homodimerization, forming a V-shaped homodimer.</text>
</comment>
<comment type="similarity">
    <text evidence="1">Belongs to the SMC family. MukB subfamily.</text>
</comment>
<feature type="chain" id="PRO_1000069906" description="Chromosome partition protein MukB">
    <location>
        <begin position="1"/>
        <end position="1482"/>
    </location>
</feature>
<feature type="region of interest" description="Flexible hinge" evidence="1">
    <location>
        <begin position="666"/>
        <end position="783"/>
    </location>
</feature>
<feature type="coiled-coil region" evidence="1">
    <location>
        <begin position="326"/>
        <end position="416"/>
    </location>
</feature>
<feature type="coiled-coil region" evidence="1">
    <location>
        <begin position="509"/>
        <end position="603"/>
    </location>
</feature>
<feature type="coiled-coil region" evidence="1">
    <location>
        <begin position="780"/>
        <end position="805"/>
    </location>
</feature>
<feature type="coiled-coil region" evidence="1">
    <location>
        <begin position="835"/>
        <end position="923"/>
    </location>
</feature>
<feature type="coiled-coil region" evidence="1">
    <location>
        <begin position="979"/>
        <end position="1116"/>
    </location>
</feature>
<feature type="coiled-coil region" evidence="1">
    <location>
        <begin position="1210"/>
        <end position="1265"/>
    </location>
</feature>
<feature type="binding site" evidence="1">
    <location>
        <begin position="34"/>
        <end position="41"/>
    </location>
    <ligand>
        <name>ATP</name>
        <dbReference type="ChEBI" id="CHEBI:30616"/>
    </ligand>
</feature>
<reference key="1">
    <citation type="journal article" date="2010" name="PLoS Genet.">
        <title>Genome sequence of the plant growth promoting endophytic bacterium Enterobacter sp. 638.</title>
        <authorList>
            <person name="Taghavi S."/>
            <person name="van der Lelie D."/>
            <person name="Hoffman A."/>
            <person name="Zhang Y.B."/>
            <person name="Walla M.D."/>
            <person name="Vangronsveld J."/>
            <person name="Newman L."/>
            <person name="Monchy S."/>
        </authorList>
    </citation>
    <scope>NUCLEOTIDE SEQUENCE [LARGE SCALE GENOMIC DNA]</scope>
    <source>
        <strain>638</strain>
    </source>
</reference>
<organism>
    <name type="scientific">Enterobacter sp. (strain 638)</name>
    <dbReference type="NCBI Taxonomy" id="399742"/>
    <lineage>
        <taxon>Bacteria</taxon>
        <taxon>Pseudomonadati</taxon>
        <taxon>Pseudomonadota</taxon>
        <taxon>Gammaproteobacteria</taxon>
        <taxon>Enterobacterales</taxon>
        <taxon>Enterobacteriaceae</taxon>
        <taxon>Enterobacter</taxon>
    </lineage>
</organism>
<protein>
    <recommendedName>
        <fullName evidence="1">Chromosome partition protein MukB</fullName>
    </recommendedName>
    <alternativeName>
        <fullName evidence="1">Structural maintenance of chromosome-related protein</fullName>
    </alternativeName>
</protein>
<dbReference type="EMBL" id="CP000653">
    <property type="protein sequence ID" value="ABP60123.1"/>
    <property type="molecule type" value="Genomic_DNA"/>
</dbReference>
<dbReference type="RefSeq" id="WP_012016840.1">
    <property type="nucleotide sequence ID" value="NC_009436.1"/>
</dbReference>
<dbReference type="SMR" id="A4W8U3"/>
<dbReference type="STRING" id="399742.Ent638_1443"/>
<dbReference type="KEGG" id="ent:Ent638_1443"/>
<dbReference type="eggNOG" id="COG3096">
    <property type="taxonomic scope" value="Bacteria"/>
</dbReference>
<dbReference type="HOGENOM" id="CLU_004430_0_0_6"/>
<dbReference type="OrthoDB" id="6722439at2"/>
<dbReference type="Proteomes" id="UP000000230">
    <property type="component" value="Chromosome"/>
</dbReference>
<dbReference type="GO" id="GO:0005737">
    <property type="term" value="C:cytoplasm"/>
    <property type="evidence" value="ECO:0007669"/>
    <property type="project" value="UniProtKB-UniRule"/>
</dbReference>
<dbReference type="GO" id="GO:0009295">
    <property type="term" value="C:nucleoid"/>
    <property type="evidence" value="ECO:0007669"/>
    <property type="project" value="UniProtKB-SubCell"/>
</dbReference>
<dbReference type="GO" id="GO:0005524">
    <property type="term" value="F:ATP binding"/>
    <property type="evidence" value="ECO:0007669"/>
    <property type="project" value="UniProtKB-UniRule"/>
</dbReference>
<dbReference type="GO" id="GO:0003677">
    <property type="term" value="F:DNA binding"/>
    <property type="evidence" value="ECO:0007669"/>
    <property type="project" value="UniProtKB-UniRule"/>
</dbReference>
<dbReference type="GO" id="GO:0051301">
    <property type="term" value="P:cell division"/>
    <property type="evidence" value="ECO:0007669"/>
    <property type="project" value="UniProtKB-KW"/>
</dbReference>
<dbReference type="GO" id="GO:0030261">
    <property type="term" value="P:chromosome condensation"/>
    <property type="evidence" value="ECO:0007669"/>
    <property type="project" value="UniProtKB-KW"/>
</dbReference>
<dbReference type="GO" id="GO:0007059">
    <property type="term" value="P:chromosome segregation"/>
    <property type="evidence" value="ECO:0007669"/>
    <property type="project" value="UniProtKB-UniRule"/>
</dbReference>
<dbReference type="GO" id="GO:0006260">
    <property type="term" value="P:DNA replication"/>
    <property type="evidence" value="ECO:0007669"/>
    <property type="project" value="UniProtKB-UniRule"/>
</dbReference>
<dbReference type="FunFam" id="3.30.70.3500:FF:000001">
    <property type="entry name" value="Chromosome partition protein MukB"/>
    <property type="match status" value="1"/>
</dbReference>
<dbReference type="FunFam" id="3.40.1140.10:FF:000001">
    <property type="entry name" value="Chromosome partition protein MukB"/>
    <property type="match status" value="1"/>
</dbReference>
<dbReference type="FunFam" id="3.40.1140.10:FF:000002">
    <property type="entry name" value="Chromosome partition protein MukB"/>
    <property type="match status" value="1"/>
</dbReference>
<dbReference type="Gene3D" id="1.10.287.1490">
    <property type="match status" value="1"/>
</dbReference>
<dbReference type="Gene3D" id="1.20.58.850">
    <property type="match status" value="1"/>
</dbReference>
<dbReference type="Gene3D" id="3.40.1140.10">
    <property type="match status" value="2"/>
</dbReference>
<dbReference type="Gene3D" id="1.20.5.420">
    <property type="entry name" value="Immunoglobulin FC, subunit C"/>
    <property type="match status" value="1"/>
</dbReference>
<dbReference type="Gene3D" id="3.30.70.3500">
    <property type="entry name" value="MukB, hinge domain"/>
    <property type="match status" value="1"/>
</dbReference>
<dbReference type="HAMAP" id="MF_01800">
    <property type="entry name" value="MukB"/>
    <property type="match status" value="1"/>
</dbReference>
<dbReference type="InterPro" id="IPR012090">
    <property type="entry name" value="MukB"/>
</dbReference>
<dbReference type="InterPro" id="IPR050308">
    <property type="entry name" value="MukB/SMC"/>
</dbReference>
<dbReference type="InterPro" id="IPR032520">
    <property type="entry name" value="MukB_hinge"/>
</dbReference>
<dbReference type="InterPro" id="IPR042501">
    <property type="entry name" value="MukB_hinge_sf"/>
</dbReference>
<dbReference type="InterPro" id="IPR007406">
    <property type="entry name" value="MukB_N_dom"/>
</dbReference>
<dbReference type="InterPro" id="IPR027417">
    <property type="entry name" value="P-loop_NTPase"/>
</dbReference>
<dbReference type="NCBIfam" id="NF003422">
    <property type="entry name" value="PRK04863.1"/>
    <property type="match status" value="1"/>
</dbReference>
<dbReference type="PANTHER" id="PTHR42963">
    <property type="entry name" value="CHROMOSOME PARTITION PROTEIN MUKB"/>
    <property type="match status" value="1"/>
</dbReference>
<dbReference type="PANTHER" id="PTHR42963:SF1">
    <property type="entry name" value="DUF4476 DOMAIN-CONTAINING PROTEIN"/>
    <property type="match status" value="1"/>
</dbReference>
<dbReference type="Pfam" id="PF04310">
    <property type="entry name" value="MukB"/>
    <property type="match status" value="1"/>
</dbReference>
<dbReference type="Pfam" id="PF16330">
    <property type="entry name" value="MukB_hinge"/>
    <property type="match status" value="1"/>
</dbReference>
<dbReference type="Pfam" id="PF13558">
    <property type="entry name" value="SbcC_Walker_B"/>
    <property type="match status" value="1"/>
</dbReference>
<dbReference type="PIRSF" id="PIRSF005246">
    <property type="entry name" value="MukB"/>
    <property type="match status" value="1"/>
</dbReference>
<dbReference type="SUPFAM" id="SSF52540">
    <property type="entry name" value="P-loop containing nucleoside triphosphate hydrolases"/>
    <property type="match status" value="2"/>
</dbReference>
<evidence type="ECO:0000255" key="1">
    <source>
        <dbReference type="HAMAP-Rule" id="MF_01800"/>
    </source>
</evidence>